<protein>
    <recommendedName>
        <fullName evidence="2">Photosystem II reaction center protein H</fullName>
        <shortName evidence="2">PSII-H</shortName>
    </recommendedName>
    <alternativeName>
        <fullName evidence="2">Photosystem II 10 kDa phosphoprotein</fullName>
    </alternativeName>
</protein>
<feature type="initiator methionine" description="Removed" evidence="1">
    <location>
        <position position="1"/>
    </location>
</feature>
<feature type="chain" id="PRO_0000275751" description="Photosystem II reaction center protein H">
    <location>
        <begin position="2"/>
        <end position="73"/>
    </location>
</feature>
<feature type="transmembrane region" description="Helical" evidence="2">
    <location>
        <begin position="40"/>
        <end position="60"/>
    </location>
</feature>
<feature type="region of interest" description="Disordered" evidence="3">
    <location>
        <begin position="1"/>
        <end position="20"/>
    </location>
</feature>
<feature type="compositionally biased region" description="Polar residues" evidence="3">
    <location>
        <begin position="1"/>
        <end position="11"/>
    </location>
</feature>
<feature type="modified residue" description="Phosphothreonine" evidence="2">
    <location>
        <position position="3"/>
    </location>
</feature>
<feature type="modified residue" description="Phosphothreonine" evidence="2">
    <location>
        <position position="5"/>
    </location>
</feature>
<name>PSBH_DAUCA</name>
<reference key="1">
    <citation type="journal article" date="2006" name="BMC Genomics">
        <title>Complete plastid genome sequence of Daucus carota: implications for biotechnology and phylogeny of angiosperms.</title>
        <authorList>
            <person name="Ruhlman T."/>
            <person name="Lee S.-B."/>
            <person name="Jansen R.K."/>
            <person name="Hostetler J.B."/>
            <person name="Tallon L.J."/>
            <person name="Town C.D."/>
            <person name="Daniell H."/>
        </authorList>
    </citation>
    <scope>NUCLEOTIDE SEQUENCE [LARGE SCALE GENOMIC DNA]</scope>
    <source>
        <strain>cv. Danvers Half-long</strain>
    </source>
</reference>
<gene>
    <name evidence="2" type="primary">psbH</name>
</gene>
<evidence type="ECO:0000250" key="1">
    <source>
        <dbReference type="UniProtKB" id="P56780"/>
    </source>
</evidence>
<evidence type="ECO:0000255" key="2">
    <source>
        <dbReference type="HAMAP-Rule" id="MF_00752"/>
    </source>
</evidence>
<evidence type="ECO:0000256" key="3">
    <source>
        <dbReference type="SAM" id="MobiDB-lite"/>
    </source>
</evidence>
<keyword id="KW-0150">Chloroplast</keyword>
<keyword id="KW-0472">Membrane</keyword>
<keyword id="KW-0597">Phosphoprotein</keyword>
<keyword id="KW-0602">Photosynthesis</keyword>
<keyword id="KW-0604">Photosystem II</keyword>
<keyword id="KW-0934">Plastid</keyword>
<keyword id="KW-0793">Thylakoid</keyword>
<keyword id="KW-0812">Transmembrane</keyword>
<keyword id="KW-1133">Transmembrane helix</keyword>
<geneLocation type="chloroplast"/>
<dbReference type="EMBL" id="DQ898156">
    <property type="protein sequence ID" value="ABI32452.1"/>
    <property type="molecule type" value="Genomic_DNA"/>
</dbReference>
<dbReference type="RefSeq" id="YP_740146.1">
    <property type="nucleotide sequence ID" value="NC_008325.1"/>
</dbReference>
<dbReference type="SMR" id="Q0G9T3"/>
<dbReference type="GeneID" id="4266773"/>
<dbReference type="OMA" id="APEWETT"/>
<dbReference type="GO" id="GO:0009535">
    <property type="term" value="C:chloroplast thylakoid membrane"/>
    <property type="evidence" value="ECO:0007669"/>
    <property type="project" value="UniProtKB-SubCell"/>
</dbReference>
<dbReference type="GO" id="GO:0009523">
    <property type="term" value="C:photosystem II"/>
    <property type="evidence" value="ECO:0007669"/>
    <property type="project" value="UniProtKB-KW"/>
</dbReference>
<dbReference type="GO" id="GO:0042301">
    <property type="term" value="F:phosphate ion binding"/>
    <property type="evidence" value="ECO:0007669"/>
    <property type="project" value="InterPro"/>
</dbReference>
<dbReference type="GO" id="GO:0015979">
    <property type="term" value="P:photosynthesis"/>
    <property type="evidence" value="ECO:0007669"/>
    <property type="project" value="UniProtKB-UniRule"/>
</dbReference>
<dbReference type="GO" id="GO:0050821">
    <property type="term" value="P:protein stabilization"/>
    <property type="evidence" value="ECO:0007669"/>
    <property type="project" value="InterPro"/>
</dbReference>
<dbReference type="FunFam" id="1.20.5.880:FF:000001">
    <property type="entry name" value="Photosystem II reaction center protein H"/>
    <property type="match status" value="1"/>
</dbReference>
<dbReference type="Gene3D" id="1.20.5.880">
    <property type="entry name" value="Photosystem II reaction center protein H"/>
    <property type="match status" value="1"/>
</dbReference>
<dbReference type="HAMAP" id="MF_00752">
    <property type="entry name" value="PSII_PsbH"/>
    <property type="match status" value="1"/>
</dbReference>
<dbReference type="InterPro" id="IPR001056">
    <property type="entry name" value="PSII_PsbH"/>
</dbReference>
<dbReference type="InterPro" id="IPR036863">
    <property type="entry name" value="PSII_PsbH_sf"/>
</dbReference>
<dbReference type="NCBIfam" id="NF002728">
    <property type="entry name" value="PRK02624.1"/>
    <property type="match status" value="1"/>
</dbReference>
<dbReference type="PANTHER" id="PTHR34469">
    <property type="entry name" value="PHOTOSYSTEM II REACTION CENTER PROTEIN H"/>
    <property type="match status" value="1"/>
</dbReference>
<dbReference type="PANTHER" id="PTHR34469:SF4">
    <property type="entry name" value="PHOTOSYSTEM II REACTION CENTER PROTEIN H"/>
    <property type="match status" value="1"/>
</dbReference>
<dbReference type="Pfam" id="PF00737">
    <property type="entry name" value="PsbH"/>
    <property type="match status" value="1"/>
</dbReference>
<dbReference type="SUPFAM" id="SSF161025">
    <property type="entry name" value="Photosystem II 10 kDa phosphoprotein PsbH"/>
    <property type="match status" value="1"/>
</dbReference>
<comment type="function">
    <text evidence="2">One of the components of the core complex of photosystem II (PSII), required for its stability and/or assembly. PSII is a light-driven water:plastoquinone oxidoreductase that uses light energy to abstract electrons from H(2)O, generating O(2) and a proton gradient subsequently used for ATP formation. It consists of a core antenna complex that captures photons, and an electron transfer chain that converts photonic excitation into a charge separation.</text>
</comment>
<comment type="subunit">
    <text evidence="2">PSII is composed of 1 copy each of membrane proteins PsbA, PsbB, PsbC, PsbD, PsbE, PsbF, PsbH, PsbI, PsbJ, PsbK, PsbL, PsbM, PsbT, PsbX, PsbY, PsbZ, Psb30/Ycf12, at least 3 peripheral proteins of the oxygen-evolving complex and a large number of cofactors. It forms dimeric complexes.</text>
</comment>
<comment type="subcellular location">
    <subcellularLocation>
        <location evidence="2">Plastid</location>
        <location evidence="2">Chloroplast thylakoid membrane</location>
        <topology evidence="2">Single-pass membrane protein</topology>
    </subcellularLocation>
</comment>
<comment type="PTM">
    <text evidence="2">Phosphorylation is a light-dependent reaction catalyzed by a membrane-bound kinase; phosphorylation occurs on Thr residue(s) in the N-terminus of the protein.</text>
</comment>
<comment type="similarity">
    <text evidence="2">Belongs to the PsbH family.</text>
</comment>
<proteinExistence type="inferred from homology"/>
<organism>
    <name type="scientific">Daucus carota</name>
    <name type="common">Wild carrot</name>
    <dbReference type="NCBI Taxonomy" id="4039"/>
    <lineage>
        <taxon>Eukaryota</taxon>
        <taxon>Viridiplantae</taxon>
        <taxon>Streptophyta</taxon>
        <taxon>Embryophyta</taxon>
        <taxon>Tracheophyta</taxon>
        <taxon>Spermatophyta</taxon>
        <taxon>Magnoliopsida</taxon>
        <taxon>eudicotyledons</taxon>
        <taxon>Gunneridae</taxon>
        <taxon>Pentapetalae</taxon>
        <taxon>asterids</taxon>
        <taxon>campanulids</taxon>
        <taxon>Apiales</taxon>
        <taxon>Apiaceae</taxon>
        <taxon>Apioideae</taxon>
        <taxon>Scandiceae</taxon>
        <taxon>Daucinae</taxon>
        <taxon>Daucus</taxon>
        <taxon>Daucus sect. Daucus</taxon>
    </lineage>
</organism>
<accession>Q0G9T3</accession>
<sequence>MATQTVENVSRSRPKPTTVGGLLKPLNSEYGKVAPGWGTAPLMGVAMALFAIFLSIILEIYNSSVLLDGISMN</sequence>